<keyword id="KW-0998">Cell outer membrane</keyword>
<keyword id="KW-0903">Direct protein sequencing</keyword>
<keyword id="KW-0406">Ion transport</keyword>
<keyword id="KW-0472">Membrane</keyword>
<keyword id="KW-0626">Porin</keyword>
<keyword id="KW-0812">Transmembrane</keyword>
<keyword id="KW-1134">Transmembrane beta strand</keyword>
<keyword id="KW-0813">Transport</keyword>
<dbReference type="PIR" id="A54538">
    <property type="entry name" value="A54538"/>
</dbReference>
<dbReference type="STRING" id="714.ACT75_02545"/>
<dbReference type="eggNOG" id="COG3203">
    <property type="taxonomic scope" value="Bacteria"/>
</dbReference>
<dbReference type="GO" id="GO:0009279">
    <property type="term" value="C:cell outer membrane"/>
    <property type="evidence" value="ECO:0007669"/>
    <property type="project" value="UniProtKB-SubCell"/>
</dbReference>
<dbReference type="GO" id="GO:0046930">
    <property type="term" value="C:pore complex"/>
    <property type="evidence" value="ECO:0007669"/>
    <property type="project" value="UniProtKB-KW"/>
</dbReference>
<dbReference type="GO" id="GO:0015288">
    <property type="term" value="F:porin activity"/>
    <property type="evidence" value="ECO:0007669"/>
    <property type="project" value="UniProtKB-KW"/>
</dbReference>
<dbReference type="GO" id="GO:0006811">
    <property type="term" value="P:monoatomic ion transport"/>
    <property type="evidence" value="ECO:0007669"/>
    <property type="project" value="UniProtKB-KW"/>
</dbReference>
<feature type="chain" id="PRO_0000198023" description="39 kDa major outer membrane protein">
    <location>
        <begin position="1"/>
        <end position="20" status="greater than"/>
    </location>
</feature>
<feature type="non-terminal residue">
    <location>
        <position position="20"/>
    </location>
</feature>
<proteinExistence type="evidence at protein level"/>
<organism>
    <name type="scientific">Aggregatibacter actinomycetemcomitans</name>
    <name type="common">Actinobacillus actinomycetemcomitans</name>
    <name type="synonym">Haemophilus actinomycetemcomitans</name>
    <dbReference type="NCBI Taxonomy" id="714"/>
    <lineage>
        <taxon>Bacteria</taxon>
        <taxon>Pseudomonadati</taxon>
        <taxon>Pseudomonadota</taxon>
        <taxon>Gammaproteobacteria</taxon>
        <taxon>Pasteurellales</taxon>
        <taxon>Pasteurellaceae</taxon>
        <taxon>Aggregatibacter</taxon>
    </lineage>
</organism>
<reference key="1">
    <citation type="journal article" date="1991" name="FEMS Microbiol. Lett.">
        <title>Isolation and partial characterization of a 39 kDa major outer membrane protein of Actinobacillus actinomycetemcomitans Y4.</title>
        <authorList>
            <person name="Kokeguchi S."/>
            <person name="Kato K."/>
            <person name="Nishimura F."/>
            <person name="Kurihara H."/>
            <person name="Murayama Y."/>
        </authorList>
    </citation>
    <scope>PROTEIN SEQUENCE</scope>
    <source>
        <strain>ATCC 43718 / FDC Y4 / Serotype b</strain>
    </source>
</reference>
<protein>
    <recommendedName>
        <fullName>39 kDa major outer membrane protein</fullName>
    </recommendedName>
</protein>
<sequence length="20" mass="2316">VKVYNQFGTKVELGVSMRIF</sequence>
<comment type="subcellular location">
    <subcellularLocation>
        <location>Cell outer membrane</location>
    </subcellularLocation>
</comment>
<name>OMP1_AGGAC</name>
<accession>P20242</accession>